<evidence type="ECO:0000250" key="1"/>
<evidence type="ECO:0000250" key="2">
    <source>
        <dbReference type="UniProtKB" id="P24298"/>
    </source>
</evidence>
<evidence type="ECO:0000269" key="3">
    <source>
    </source>
</evidence>
<evidence type="ECO:0000305" key="4"/>
<accession>P25409</accession>
<accession>Q4V7F7</accession>
<proteinExistence type="evidence at protein level"/>
<reference key="1">
    <citation type="submission" date="1994-03" db="EMBL/GenBank/DDBJ databases">
        <authorList>
            <person name="Tanase S."/>
        </authorList>
    </citation>
    <scope>NUCLEOTIDE SEQUENCE [MRNA]</scope>
    <source>
        <strain>Sprague-Dawley</strain>
        <tissue>Liver</tissue>
    </source>
</reference>
<reference key="2">
    <citation type="journal article" date="2004" name="Genome Res.">
        <title>The status, quality, and expansion of the NIH full-length cDNA project: the Mammalian Gene Collection (MGC).</title>
        <authorList>
            <consortium name="The MGC Project Team"/>
        </authorList>
    </citation>
    <scope>NUCLEOTIDE SEQUENCE [LARGE SCALE MRNA]</scope>
    <source>
        <tissue>Liver</tissue>
    </source>
</reference>
<reference key="3">
    <citation type="journal article" date="1991" name="Biochemistry">
        <title>Complete amino acid sequence of rat liver cytosolic alanine aminotransferase.</title>
        <authorList>
            <person name="Ishiguro M."/>
            <person name="Suzuki M."/>
            <person name="Takio K."/>
            <person name="Matsuzawa T."/>
            <person name="Titani K."/>
        </authorList>
    </citation>
    <scope>PROTEIN SEQUENCE OF 2-496</scope>
    <scope>CLEAVAGE OF INITIATOR METHIONINE</scope>
    <scope>ACETYLATION AT ALA-2</scope>
    <source>
        <tissue>Liver</tissue>
    </source>
</reference>
<dbReference type="EC" id="2.6.1.2"/>
<dbReference type="EMBL" id="D10354">
    <property type="protein sequence ID" value="BAA01185.1"/>
    <property type="molecule type" value="mRNA"/>
</dbReference>
<dbReference type="EMBL" id="BC097937">
    <property type="protein sequence ID" value="AAH97937.1"/>
    <property type="molecule type" value="mRNA"/>
</dbReference>
<dbReference type="PIR" id="A39900">
    <property type="entry name" value="A39900"/>
</dbReference>
<dbReference type="RefSeq" id="NP_112301.1">
    <property type="nucleotide sequence ID" value="NM_031039.2"/>
</dbReference>
<dbReference type="RefSeq" id="XP_063120365.1">
    <property type="nucleotide sequence ID" value="XM_063264295.1"/>
</dbReference>
<dbReference type="RefSeq" id="XP_063120366.1">
    <property type="nucleotide sequence ID" value="XM_063264296.1"/>
</dbReference>
<dbReference type="RefSeq" id="XP_063120367.1">
    <property type="nucleotide sequence ID" value="XM_063264297.1"/>
</dbReference>
<dbReference type="SMR" id="P25409"/>
<dbReference type="FunCoup" id="P25409">
    <property type="interactions" value="624"/>
</dbReference>
<dbReference type="STRING" id="10116.ENSRNOP00000044411"/>
<dbReference type="ChEMBL" id="CHEMBL3260"/>
<dbReference type="GlyGen" id="P25409">
    <property type="glycosylation" value="1 site"/>
</dbReference>
<dbReference type="iPTMnet" id="P25409"/>
<dbReference type="PhosphoSitePlus" id="P25409"/>
<dbReference type="PaxDb" id="10116-ENSRNOP00000044411"/>
<dbReference type="Ensembl" id="ENSRNOT00000050556.4">
    <property type="protein sequence ID" value="ENSRNOP00000044411.2"/>
    <property type="gene ID" value="ENSRNOG00000033915.4"/>
</dbReference>
<dbReference type="GeneID" id="81670"/>
<dbReference type="KEGG" id="rno:81670"/>
<dbReference type="UCSC" id="RGD:621720">
    <property type="organism name" value="rat"/>
</dbReference>
<dbReference type="AGR" id="RGD:621720"/>
<dbReference type="CTD" id="2875"/>
<dbReference type="RGD" id="621720">
    <property type="gene designation" value="Gpt"/>
</dbReference>
<dbReference type="eggNOG" id="KOG0258">
    <property type="taxonomic scope" value="Eukaryota"/>
</dbReference>
<dbReference type="GeneTree" id="ENSGT00940000155265"/>
<dbReference type="HOGENOM" id="CLU_014254_3_1_1"/>
<dbReference type="InParanoid" id="P25409"/>
<dbReference type="OMA" id="AYMARTM"/>
<dbReference type="OrthoDB" id="1732682at2759"/>
<dbReference type="PhylomeDB" id="P25409"/>
<dbReference type="TreeFam" id="TF300839"/>
<dbReference type="Reactome" id="R-RNO-70268">
    <property type="pathway name" value="Pyruvate metabolism"/>
</dbReference>
<dbReference type="Reactome" id="R-RNO-8964540">
    <property type="pathway name" value="Alanine metabolism"/>
</dbReference>
<dbReference type="SABIO-RK" id="P25409"/>
<dbReference type="UniPathway" id="UPA00528">
    <property type="reaction ID" value="UER00586"/>
</dbReference>
<dbReference type="PRO" id="PR:P25409"/>
<dbReference type="Proteomes" id="UP000002494">
    <property type="component" value="Chromosome 7"/>
</dbReference>
<dbReference type="Bgee" id="ENSRNOG00000033915">
    <property type="expression patterns" value="Expressed in jejunum and 20 other cell types or tissues"/>
</dbReference>
<dbReference type="GO" id="GO:0005737">
    <property type="term" value="C:cytoplasm"/>
    <property type="evidence" value="ECO:0007669"/>
    <property type="project" value="UniProtKB-SubCell"/>
</dbReference>
<dbReference type="GO" id="GO:0005615">
    <property type="term" value="C:extracellular space"/>
    <property type="evidence" value="ECO:0000314"/>
    <property type="project" value="RGD"/>
</dbReference>
<dbReference type="GO" id="GO:0004021">
    <property type="term" value="F:L-alanine:2-oxoglutarate aminotransferase activity"/>
    <property type="evidence" value="ECO:0000303"/>
    <property type="project" value="RGD"/>
</dbReference>
<dbReference type="GO" id="GO:0030170">
    <property type="term" value="F:pyridoxal phosphate binding"/>
    <property type="evidence" value="ECO:0000303"/>
    <property type="project" value="RGD"/>
</dbReference>
<dbReference type="GO" id="GO:0009058">
    <property type="term" value="P:biosynthetic process"/>
    <property type="evidence" value="ECO:0007669"/>
    <property type="project" value="InterPro"/>
</dbReference>
<dbReference type="GO" id="GO:0032869">
    <property type="term" value="P:cellular response to insulin stimulus"/>
    <property type="evidence" value="ECO:0000270"/>
    <property type="project" value="RGD"/>
</dbReference>
<dbReference type="GO" id="GO:0042853">
    <property type="term" value="P:L-alanine catabolic process"/>
    <property type="evidence" value="ECO:0007669"/>
    <property type="project" value="UniProtKB-UniPathway"/>
</dbReference>
<dbReference type="GO" id="GO:0045722">
    <property type="term" value="P:positive regulation of gluconeogenesis"/>
    <property type="evidence" value="ECO:0000314"/>
    <property type="project" value="RGD"/>
</dbReference>
<dbReference type="GO" id="GO:0031667">
    <property type="term" value="P:response to nutrient levels"/>
    <property type="evidence" value="ECO:0000270"/>
    <property type="project" value="RGD"/>
</dbReference>
<dbReference type="GO" id="GO:0042594">
    <property type="term" value="P:response to starvation"/>
    <property type="evidence" value="ECO:0000270"/>
    <property type="project" value="RGD"/>
</dbReference>
<dbReference type="CDD" id="cd00609">
    <property type="entry name" value="AAT_like"/>
    <property type="match status" value="1"/>
</dbReference>
<dbReference type="FunFam" id="1.10.287.1970:FF:000001">
    <property type="entry name" value="Alanine aminotransferase 2"/>
    <property type="match status" value="1"/>
</dbReference>
<dbReference type="FunFam" id="3.40.640.10:FF:000236">
    <property type="entry name" value="Alanine aminotransferase 2"/>
    <property type="match status" value="1"/>
</dbReference>
<dbReference type="FunFam" id="3.90.1150.10:FF:000010">
    <property type="entry name" value="Alanine aminotransferase 2"/>
    <property type="match status" value="1"/>
</dbReference>
<dbReference type="Gene3D" id="1.10.287.1970">
    <property type="match status" value="1"/>
</dbReference>
<dbReference type="Gene3D" id="3.90.1150.10">
    <property type="entry name" value="Aspartate Aminotransferase, domain 1"/>
    <property type="match status" value="1"/>
</dbReference>
<dbReference type="Gene3D" id="3.40.640.10">
    <property type="entry name" value="Type I PLP-dependent aspartate aminotransferase-like (Major domain)"/>
    <property type="match status" value="1"/>
</dbReference>
<dbReference type="InterPro" id="IPR045088">
    <property type="entry name" value="ALAT1/2-like"/>
</dbReference>
<dbReference type="InterPro" id="IPR004839">
    <property type="entry name" value="Aminotransferase_I/II_large"/>
</dbReference>
<dbReference type="InterPro" id="IPR015424">
    <property type="entry name" value="PyrdxlP-dep_Trfase"/>
</dbReference>
<dbReference type="InterPro" id="IPR015421">
    <property type="entry name" value="PyrdxlP-dep_Trfase_major"/>
</dbReference>
<dbReference type="InterPro" id="IPR015422">
    <property type="entry name" value="PyrdxlP-dep_Trfase_small"/>
</dbReference>
<dbReference type="PANTHER" id="PTHR11751">
    <property type="entry name" value="ALANINE AMINOTRANSFERASE"/>
    <property type="match status" value="1"/>
</dbReference>
<dbReference type="PANTHER" id="PTHR11751:SF308">
    <property type="entry name" value="ALANINE AMINOTRANSFERASE 1"/>
    <property type="match status" value="1"/>
</dbReference>
<dbReference type="Pfam" id="PF00155">
    <property type="entry name" value="Aminotran_1_2"/>
    <property type="match status" value="1"/>
</dbReference>
<dbReference type="SUPFAM" id="SSF53383">
    <property type="entry name" value="PLP-dependent transferases"/>
    <property type="match status" value="1"/>
</dbReference>
<feature type="initiator methionine" description="Removed" evidence="3">
    <location>
        <position position="1"/>
    </location>
</feature>
<feature type="chain" id="PRO_0000123936" description="Alanine aminotransferase 1">
    <location>
        <begin position="2"/>
        <end position="496"/>
    </location>
</feature>
<feature type="modified residue" description="N-acetylalanine" evidence="3">
    <location>
        <position position="2"/>
    </location>
</feature>
<feature type="modified residue" description="Phosphothreonine" evidence="2">
    <location>
        <position position="22"/>
    </location>
</feature>
<feature type="modified residue" description="N6-(pyridoxal phosphate)lysine" evidence="1">
    <location>
        <position position="314"/>
    </location>
</feature>
<keyword id="KW-0007">Acetylation</keyword>
<keyword id="KW-0032">Aminotransferase</keyword>
<keyword id="KW-0963">Cytoplasm</keyword>
<keyword id="KW-0903">Direct protein sequencing</keyword>
<keyword id="KW-0597">Phosphoprotein</keyword>
<keyword id="KW-0663">Pyridoxal phosphate</keyword>
<keyword id="KW-1185">Reference proteome</keyword>
<keyword id="KW-0808">Transferase</keyword>
<name>ALAT1_RAT</name>
<organism>
    <name type="scientific">Rattus norvegicus</name>
    <name type="common">Rat</name>
    <dbReference type="NCBI Taxonomy" id="10116"/>
    <lineage>
        <taxon>Eukaryota</taxon>
        <taxon>Metazoa</taxon>
        <taxon>Chordata</taxon>
        <taxon>Craniata</taxon>
        <taxon>Vertebrata</taxon>
        <taxon>Euteleostomi</taxon>
        <taxon>Mammalia</taxon>
        <taxon>Eutheria</taxon>
        <taxon>Euarchontoglires</taxon>
        <taxon>Glires</taxon>
        <taxon>Rodentia</taxon>
        <taxon>Myomorpha</taxon>
        <taxon>Muroidea</taxon>
        <taxon>Muridae</taxon>
        <taxon>Murinae</taxon>
        <taxon>Rattus</taxon>
    </lineage>
</organism>
<protein>
    <recommendedName>
        <fullName>Alanine aminotransferase 1</fullName>
        <shortName>ALT1</shortName>
        <ecNumber>2.6.1.2</ecNumber>
    </recommendedName>
    <alternativeName>
        <fullName>Glutamate pyruvate transaminase 1</fullName>
        <shortName>GPT 1</shortName>
    </alternativeName>
    <alternativeName>
        <fullName>Glutamic--alanine transaminase 1</fullName>
    </alternativeName>
    <alternativeName>
        <fullName>Glutamic--pyruvic transaminase 1</fullName>
    </alternativeName>
</protein>
<sequence>MASRVNDQSQASRNGLKGKVLTLDTMNPCVRRVEYAVRGPIVQRALELEQELRQGVKKPFTEVIRANIGDAQAMGQRPITFFRQVLALCVYPNLLSSPDFPEDAKRRAERILQACGGHSLGAYSISSGIQPIREDVAQYIERRDGGIPADPNNIFLSTGASDAIVTMLKLLVSGEGRARTGVLIPIPQYPLYSAALAELDAVQVDYYLDEERAWALDIAELRRALCQARDRCCPRVLCVINPGNPTGQVQTRECIEAVIRFAFKEGLFLMADEVYQDNVYAEGSQFHSFKKVLMEMGPPYSTQQELASFHSVSKGYMGECGFRGGYVEVVNMDAEVQKQMGKLMSVRLCPPVPGQALMDMVVSPPTPSEPSFKQFQAERQEVLAELAAKAKLTEQVFNEAPGIRCNPVQGAMYSFPQVQLPLKAVQRAQELGLAPDMFFCLCLLEETGICVVPGSGFGQQEGTYHFRMTILPPMEKLRLLLEKLSHFHAKFTHEYS</sequence>
<gene>
    <name type="primary">Gpt</name>
    <name type="synonym">Aat1</name>
    <name type="synonym">Gpt1</name>
</gene>
<comment type="function">
    <text evidence="1">Catalyzes the reversible transamination between alanine and 2-oxoglutarate to form pyruvate and glutamate. Participates in cellular nitrogen metabolism and also in liver gluconeogenesis starting with precursors transported from skeletal muscles (By similarity).</text>
</comment>
<comment type="catalytic activity">
    <reaction>
        <text>L-alanine + 2-oxoglutarate = pyruvate + L-glutamate</text>
        <dbReference type="Rhea" id="RHEA:19453"/>
        <dbReference type="ChEBI" id="CHEBI:15361"/>
        <dbReference type="ChEBI" id="CHEBI:16810"/>
        <dbReference type="ChEBI" id="CHEBI:29985"/>
        <dbReference type="ChEBI" id="CHEBI:57972"/>
        <dbReference type="EC" id="2.6.1.2"/>
    </reaction>
</comment>
<comment type="cofactor">
    <cofactor>
        <name>pyridoxal 5'-phosphate</name>
        <dbReference type="ChEBI" id="CHEBI:597326"/>
    </cofactor>
</comment>
<comment type="pathway">
    <text>Amino-acid degradation; L-alanine degradation via transaminase pathway; pyruvate from L-alanine: step 1/1.</text>
</comment>
<comment type="subunit">
    <text>Homodimer.</text>
</comment>
<comment type="subcellular location">
    <subcellularLocation>
        <location>Cytoplasm</location>
    </subcellularLocation>
</comment>
<comment type="tissue specificity">
    <text>Liver, heart, skeletal muscle, etc.</text>
</comment>
<comment type="induction">
    <text>By glucocorticoids.</text>
</comment>
<comment type="similarity">
    <text evidence="4">Belongs to the class-I pyridoxal-phosphate-dependent aminotransferase family. Alanine aminotransferase subfamily.</text>
</comment>